<proteinExistence type="inferred from homology"/>
<accession>A4Y1E6</accession>
<keyword id="KW-0963">Cytoplasm</keyword>
<keyword id="KW-0444">Lipid biosynthesis</keyword>
<keyword id="KW-0443">Lipid metabolism</keyword>
<keyword id="KW-0520">NAD</keyword>
<keyword id="KW-0521">NADP</keyword>
<keyword id="KW-0547">Nucleotide-binding</keyword>
<keyword id="KW-0560">Oxidoreductase</keyword>
<keyword id="KW-0594">Phospholipid biosynthesis</keyword>
<keyword id="KW-1208">Phospholipid metabolism</keyword>
<reference key="1">
    <citation type="submission" date="2007-04" db="EMBL/GenBank/DDBJ databases">
        <title>Complete sequence of Shewanella putrefaciens CN-32.</title>
        <authorList>
            <consortium name="US DOE Joint Genome Institute"/>
            <person name="Copeland A."/>
            <person name="Lucas S."/>
            <person name="Lapidus A."/>
            <person name="Barry K."/>
            <person name="Detter J.C."/>
            <person name="Glavina del Rio T."/>
            <person name="Hammon N."/>
            <person name="Israni S."/>
            <person name="Dalin E."/>
            <person name="Tice H."/>
            <person name="Pitluck S."/>
            <person name="Chain P."/>
            <person name="Malfatti S."/>
            <person name="Shin M."/>
            <person name="Vergez L."/>
            <person name="Schmutz J."/>
            <person name="Larimer F."/>
            <person name="Land M."/>
            <person name="Hauser L."/>
            <person name="Kyrpides N."/>
            <person name="Mikhailova N."/>
            <person name="Romine M.F."/>
            <person name="Fredrickson J."/>
            <person name="Tiedje J."/>
            <person name="Richardson P."/>
        </authorList>
    </citation>
    <scope>NUCLEOTIDE SEQUENCE [LARGE SCALE GENOMIC DNA]</scope>
    <source>
        <strain>CN-32 / ATCC BAA-453</strain>
    </source>
</reference>
<name>GPDA_SHEPC</name>
<sequence>MKNSADITVLGAGSYGTALAISLASNGHKTLLWGHDPVHMQTLAQDKCNQAFLPDIAFPDCLQIEADLAKALAASNNVLVVVPSHVFGTVLEQAKPLLRSDARIVWATKGLEPETGRLLQDVARDVLGEQYPLAVLSGPTFAKELAMGLPTAISVAGTCPQFTEDLVELLHSPKRLRVYANDDFTGLQLGGAVKNVIAIGAGMSDGIGFGANARTALITRGLVELTRLGEALGASTATFMGMAGLGDLVLTCTDNQSRNRRFGLALGKGCDVMTAQAEIGQVVEGYRNTKEVFTLAKRLGVEMPITEQIYQVLYQGKSPVDAAKELLGREKKSETPTQ</sequence>
<protein>
    <recommendedName>
        <fullName evidence="1">Glycerol-3-phosphate dehydrogenase [NAD(P)+]</fullName>
        <ecNumber evidence="1">1.1.1.94</ecNumber>
    </recommendedName>
    <alternativeName>
        <fullName evidence="1">NAD(P)(+)-dependent glycerol-3-phosphate dehydrogenase</fullName>
    </alternativeName>
    <alternativeName>
        <fullName evidence="1">NAD(P)H-dependent dihydroxyacetone-phosphate reductase</fullName>
    </alternativeName>
</protein>
<dbReference type="EC" id="1.1.1.94" evidence="1"/>
<dbReference type="EMBL" id="CP000681">
    <property type="protein sequence ID" value="ABP73779.1"/>
    <property type="molecule type" value="Genomic_DNA"/>
</dbReference>
<dbReference type="SMR" id="A4Y1E6"/>
<dbReference type="STRING" id="319224.Sputcn32_0043"/>
<dbReference type="KEGG" id="spc:Sputcn32_0043"/>
<dbReference type="eggNOG" id="COG0240">
    <property type="taxonomic scope" value="Bacteria"/>
</dbReference>
<dbReference type="HOGENOM" id="CLU_033449_0_2_6"/>
<dbReference type="UniPathway" id="UPA00940"/>
<dbReference type="GO" id="GO:0005829">
    <property type="term" value="C:cytosol"/>
    <property type="evidence" value="ECO:0007669"/>
    <property type="project" value="TreeGrafter"/>
</dbReference>
<dbReference type="GO" id="GO:0047952">
    <property type="term" value="F:glycerol-3-phosphate dehydrogenase [NAD(P)+] activity"/>
    <property type="evidence" value="ECO:0007669"/>
    <property type="project" value="UniProtKB-UniRule"/>
</dbReference>
<dbReference type="GO" id="GO:0051287">
    <property type="term" value="F:NAD binding"/>
    <property type="evidence" value="ECO:0007669"/>
    <property type="project" value="InterPro"/>
</dbReference>
<dbReference type="GO" id="GO:0005975">
    <property type="term" value="P:carbohydrate metabolic process"/>
    <property type="evidence" value="ECO:0007669"/>
    <property type="project" value="InterPro"/>
</dbReference>
<dbReference type="GO" id="GO:0046167">
    <property type="term" value="P:glycerol-3-phosphate biosynthetic process"/>
    <property type="evidence" value="ECO:0007669"/>
    <property type="project" value="UniProtKB-UniRule"/>
</dbReference>
<dbReference type="GO" id="GO:0046168">
    <property type="term" value="P:glycerol-3-phosphate catabolic process"/>
    <property type="evidence" value="ECO:0007669"/>
    <property type="project" value="InterPro"/>
</dbReference>
<dbReference type="GO" id="GO:0046474">
    <property type="term" value="P:glycerophospholipid biosynthetic process"/>
    <property type="evidence" value="ECO:0007669"/>
    <property type="project" value="TreeGrafter"/>
</dbReference>
<dbReference type="FunFam" id="1.10.1040.10:FF:000001">
    <property type="entry name" value="Glycerol-3-phosphate dehydrogenase [NAD(P)+]"/>
    <property type="match status" value="1"/>
</dbReference>
<dbReference type="FunFam" id="3.40.50.720:FF:000019">
    <property type="entry name" value="Glycerol-3-phosphate dehydrogenase [NAD(P)+]"/>
    <property type="match status" value="1"/>
</dbReference>
<dbReference type="Gene3D" id="1.10.1040.10">
    <property type="entry name" value="N-(1-d-carboxylethyl)-l-norvaline Dehydrogenase, domain 2"/>
    <property type="match status" value="1"/>
</dbReference>
<dbReference type="Gene3D" id="3.40.50.720">
    <property type="entry name" value="NAD(P)-binding Rossmann-like Domain"/>
    <property type="match status" value="1"/>
</dbReference>
<dbReference type="HAMAP" id="MF_00394">
    <property type="entry name" value="NAD_Glyc3P_dehydrog"/>
    <property type="match status" value="1"/>
</dbReference>
<dbReference type="InterPro" id="IPR008927">
    <property type="entry name" value="6-PGluconate_DH-like_C_sf"/>
</dbReference>
<dbReference type="InterPro" id="IPR013328">
    <property type="entry name" value="6PGD_dom2"/>
</dbReference>
<dbReference type="InterPro" id="IPR006168">
    <property type="entry name" value="G3P_DH_NAD-dep"/>
</dbReference>
<dbReference type="InterPro" id="IPR006109">
    <property type="entry name" value="G3P_DH_NAD-dep_C"/>
</dbReference>
<dbReference type="InterPro" id="IPR011128">
    <property type="entry name" value="G3P_DH_NAD-dep_N"/>
</dbReference>
<dbReference type="InterPro" id="IPR036291">
    <property type="entry name" value="NAD(P)-bd_dom_sf"/>
</dbReference>
<dbReference type="NCBIfam" id="NF000939">
    <property type="entry name" value="PRK00094.1-1"/>
    <property type="match status" value="1"/>
</dbReference>
<dbReference type="NCBIfam" id="NF000940">
    <property type="entry name" value="PRK00094.1-2"/>
    <property type="match status" value="1"/>
</dbReference>
<dbReference type="NCBIfam" id="NF000942">
    <property type="entry name" value="PRK00094.1-4"/>
    <property type="match status" value="1"/>
</dbReference>
<dbReference type="PANTHER" id="PTHR11728">
    <property type="entry name" value="GLYCEROL-3-PHOSPHATE DEHYDROGENASE"/>
    <property type="match status" value="1"/>
</dbReference>
<dbReference type="PANTHER" id="PTHR11728:SF1">
    <property type="entry name" value="GLYCEROL-3-PHOSPHATE DEHYDROGENASE [NAD(+)] 2, CHLOROPLASTIC"/>
    <property type="match status" value="1"/>
</dbReference>
<dbReference type="Pfam" id="PF07479">
    <property type="entry name" value="NAD_Gly3P_dh_C"/>
    <property type="match status" value="1"/>
</dbReference>
<dbReference type="Pfam" id="PF01210">
    <property type="entry name" value="NAD_Gly3P_dh_N"/>
    <property type="match status" value="1"/>
</dbReference>
<dbReference type="PIRSF" id="PIRSF000114">
    <property type="entry name" value="Glycerol-3-P_dh"/>
    <property type="match status" value="1"/>
</dbReference>
<dbReference type="PRINTS" id="PR00077">
    <property type="entry name" value="GPDHDRGNASE"/>
</dbReference>
<dbReference type="SUPFAM" id="SSF48179">
    <property type="entry name" value="6-phosphogluconate dehydrogenase C-terminal domain-like"/>
    <property type="match status" value="1"/>
</dbReference>
<dbReference type="SUPFAM" id="SSF51735">
    <property type="entry name" value="NAD(P)-binding Rossmann-fold domains"/>
    <property type="match status" value="1"/>
</dbReference>
<dbReference type="PROSITE" id="PS00957">
    <property type="entry name" value="NAD_G3PDH"/>
    <property type="match status" value="1"/>
</dbReference>
<evidence type="ECO:0000255" key="1">
    <source>
        <dbReference type="HAMAP-Rule" id="MF_00394"/>
    </source>
</evidence>
<comment type="function">
    <text evidence="1">Catalyzes the reduction of the glycolytic intermediate dihydroxyacetone phosphate (DHAP) to sn-glycerol 3-phosphate (G3P), the key precursor for phospholipid synthesis.</text>
</comment>
<comment type="catalytic activity">
    <reaction evidence="1">
        <text>sn-glycerol 3-phosphate + NAD(+) = dihydroxyacetone phosphate + NADH + H(+)</text>
        <dbReference type="Rhea" id="RHEA:11092"/>
        <dbReference type="ChEBI" id="CHEBI:15378"/>
        <dbReference type="ChEBI" id="CHEBI:57540"/>
        <dbReference type="ChEBI" id="CHEBI:57597"/>
        <dbReference type="ChEBI" id="CHEBI:57642"/>
        <dbReference type="ChEBI" id="CHEBI:57945"/>
        <dbReference type="EC" id="1.1.1.94"/>
    </reaction>
    <physiologicalReaction direction="right-to-left" evidence="1">
        <dbReference type="Rhea" id="RHEA:11094"/>
    </physiologicalReaction>
</comment>
<comment type="catalytic activity">
    <reaction evidence="1">
        <text>sn-glycerol 3-phosphate + NADP(+) = dihydroxyacetone phosphate + NADPH + H(+)</text>
        <dbReference type="Rhea" id="RHEA:11096"/>
        <dbReference type="ChEBI" id="CHEBI:15378"/>
        <dbReference type="ChEBI" id="CHEBI:57597"/>
        <dbReference type="ChEBI" id="CHEBI:57642"/>
        <dbReference type="ChEBI" id="CHEBI:57783"/>
        <dbReference type="ChEBI" id="CHEBI:58349"/>
        <dbReference type="EC" id="1.1.1.94"/>
    </reaction>
    <physiologicalReaction direction="right-to-left" evidence="1">
        <dbReference type="Rhea" id="RHEA:11098"/>
    </physiologicalReaction>
</comment>
<comment type="pathway">
    <text evidence="1">Membrane lipid metabolism; glycerophospholipid metabolism.</text>
</comment>
<comment type="subcellular location">
    <subcellularLocation>
        <location evidence="1">Cytoplasm</location>
    </subcellularLocation>
</comment>
<comment type="similarity">
    <text evidence="1">Belongs to the NAD-dependent glycerol-3-phosphate dehydrogenase family.</text>
</comment>
<feature type="chain" id="PRO_1000049552" description="Glycerol-3-phosphate dehydrogenase [NAD(P)+]">
    <location>
        <begin position="1"/>
        <end position="338"/>
    </location>
</feature>
<feature type="active site" description="Proton acceptor" evidence="1">
    <location>
        <position position="194"/>
    </location>
</feature>
<feature type="binding site" evidence="1">
    <location>
        <position position="14"/>
    </location>
    <ligand>
        <name>NADPH</name>
        <dbReference type="ChEBI" id="CHEBI:57783"/>
    </ligand>
</feature>
<feature type="binding site" evidence="1">
    <location>
        <position position="15"/>
    </location>
    <ligand>
        <name>NADPH</name>
        <dbReference type="ChEBI" id="CHEBI:57783"/>
    </ligand>
</feature>
<feature type="binding site" evidence="1">
    <location>
        <position position="35"/>
    </location>
    <ligand>
        <name>NADPH</name>
        <dbReference type="ChEBI" id="CHEBI:57783"/>
    </ligand>
</feature>
<feature type="binding site" evidence="1">
    <location>
        <position position="109"/>
    </location>
    <ligand>
        <name>NADPH</name>
        <dbReference type="ChEBI" id="CHEBI:57783"/>
    </ligand>
</feature>
<feature type="binding site" evidence="1">
    <location>
        <position position="109"/>
    </location>
    <ligand>
        <name>sn-glycerol 3-phosphate</name>
        <dbReference type="ChEBI" id="CHEBI:57597"/>
    </ligand>
</feature>
<feature type="binding site" evidence="1">
    <location>
        <position position="138"/>
    </location>
    <ligand>
        <name>sn-glycerol 3-phosphate</name>
        <dbReference type="ChEBI" id="CHEBI:57597"/>
    </ligand>
</feature>
<feature type="binding site" evidence="1">
    <location>
        <position position="140"/>
    </location>
    <ligand>
        <name>sn-glycerol 3-phosphate</name>
        <dbReference type="ChEBI" id="CHEBI:57597"/>
    </ligand>
</feature>
<feature type="binding site" evidence="1">
    <location>
        <position position="142"/>
    </location>
    <ligand>
        <name>NADPH</name>
        <dbReference type="ChEBI" id="CHEBI:57783"/>
    </ligand>
</feature>
<feature type="binding site" evidence="1">
    <location>
        <position position="194"/>
    </location>
    <ligand>
        <name>sn-glycerol 3-phosphate</name>
        <dbReference type="ChEBI" id="CHEBI:57597"/>
    </ligand>
</feature>
<feature type="binding site" evidence="1">
    <location>
        <position position="247"/>
    </location>
    <ligand>
        <name>sn-glycerol 3-phosphate</name>
        <dbReference type="ChEBI" id="CHEBI:57597"/>
    </ligand>
</feature>
<feature type="binding site" evidence="1">
    <location>
        <position position="257"/>
    </location>
    <ligand>
        <name>sn-glycerol 3-phosphate</name>
        <dbReference type="ChEBI" id="CHEBI:57597"/>
    </ligand>
</feature>
<feature type="binding site" evidence="1">
    <location>
        <position position="258"/>
    </location>
    <ligand>
        <name>NADPH</name>
        <dbReference type="ChEBI" id="CHEBI:57783"/>
    </ligand>
</feature>
<feature type="binding site" evidence="1">
    <location>
        <position position="258"/>
    </location>
    <ligand>
        <name>sn-glycerol 3-phosphate</name>
        <dbReference type="ChEBI" id="CHEBI:57597"/>
    </ligand>
</feature>
<feature type="binding site" evidence="1">
    <location>
        <position position="259"/>
    </location>
    <ligand>
        <name>sn-glycerol 3-phosphate</name>
        <dbReference type="ChEBI" id="CHEBI:57597"/>
    </ligand>
</feature>
<feature type="binding site" evidence="1">
    <location>
        <position position="282"/>
    </location>
    <ligand>
        <name>NADPH</name>
        <dbReference type="ChEBI" id="CHEBI:57783"/>
    </ligand>
</feature>
<feature type="binding site" evidence="1">
    <location>
        <position position="284"/>
    </location>
    <ligand>
        <name>NADPH</name>
        <dbReference type="ChEBI" id="CHEBI:57783"/>
    </ligand>
</feature>
<organism>
    <name type="scientific">Shewanella putrefaciens (strain CN-32 / ATCC BAA-453)</name>
    <dbReference type="NCBI Taxonomy" id="319224"/>
    <lineage>
        <taxon>Bacteria</taxon>
        <taxon>Pseudomonadati</taxon>
        <taxon>Pseudomonadota</taxon>
        <taxon>Gammaproteobacteria</taxon>
        <taxon>Alteromonadales</taxon>
        <taxon>Shewanellaceae</taxon>
        <taxon>Shewanella</taxon>
    </lineage>
</organism>
<gene>
    <name evidence="1" type="primary">gpsA</name>
    <name type="ordered locus">Sputcn32_0043</name>
</gene>